<reference key="1">
    <citation type="submission" date="2008-02" db="EMBL/GenBank/DDBJ databases">
        <title>Complete sequence of Pseudomonas putida W619.</title>
        <authorList>
            <person name="Copeland A."/>
            <person name="Lucas S."/>
            <person name="Lapidus A."/>
            <person name="Barry K."/>
            <person name="Detter J.C."/>
            <person name="Glavina del Rio T."/>
            <person name="Dalin E."/>
            <person name="Tice H."/>
            <person name="Pitluck S."/>
            <person name="Chain P."/>
            <person name="Malfatti S."/>
            <person name="Shin M."/>
            <person name="Vergez L."/>
            <person name="Schmutz J."/>
            <person name="Larimer F."/>
            <person name="Land M."/>
            <person name="Hauser L."/>
            <person name="Kyrpides N."/>
            <person name="Kim E."/>
            <person name="Taghavi S."/>
            <person name="Vangronsveld D."/>
            <person name="van der Lelie D."/>
            <person name="Richardson P."/>
        </authorList>
    </citation>
    <scope>NUCLEOTIDE SEQUENCE [LARGE SCALE GENOMIC DNA]</scope>
    <source>
        <strain>W619</strain>
    </source>
</reference>
<keyword id="KW-0963">Cytoplasm</keyword>
<keyword id="KW-0312">Gluconeogenesis</keyword>
<keyword id="KW-0324">Glycolysis</keyword>
<keyword id="KW-0413">Isomerase</keyword>
<organism>
    <name type="scientific">Pseudomonas putida (strain W619)</name>
    <dbReference type="NCBI Taxonomy" id="390235"/>
    <lineage>
        <taxon>Bacteria</taxon>
        <taxon>Pseudomonadati</taxon>
        <taxon>Pseudomonadota</taxon>
        <taxon>Gammaproteobacteria</taxon>
        <taxon>Pseudomonadales</taxon>
        <taxon>Pseudomonadaceae</taxon>
        <taxon>Pseudomonas</taxon>
    </lineage>
</organism>
<protein>
    <recommendedName>
        <fullName evidence="1">Glucose-6-phosphate isomerase</fullName>
        <shortName evidence="1">GPI</shortName>
        <ecNumber evidence="1">5.3.1.9</ecNumber>
    </recommendedName>
    <alternativeName>
        <fullName evidence="1">Phosphoglucose isomerase</fullName>
        <shortName evidence="1">PGI</shortName>
    </alternativeName>
    <alternativeName>
        <fullName evidence="1">Phosphohexose isomerase</fullName>
        <shortName evidence="1">PHI</shortName>
    </alternativeName>
</protein>
<name>G6PI_PSEPW</name>
<accession>B1J2C0</accession>
<evidence type="ECO:0000255" key="1">
    <source>
        <dbReference type="HAMAP-Rule" id="MF_00473"/>
    </source>
</evidence>
<comment type="function">
    <text evidence="1">Catalyzes the reversible isomerization of glucose-6-phosphate to fructose-6-phosphate.</text>
</comment>
<comment type="catalytic activity">
    <reaction evidence="1">
        <text>alpha-D-glucose 6-phosphate = beta-D-fructose 6-phosphate</text>
        <dbReference type="Rhea" id="RHEA:11816"/>
        <dbReference type="ChEBI" id="CHEBI:57634"/>
        <dbReference type="ChEBI" id="CHEBI:58225"/>
        <dbReference type="EC" id="5.3.1.9"/>
    </reaction>
</comment>
<comment type="pathway">
    <text evidence="1">Carbohydrate biosynthesis; gluconeogenesis.</text>
</comment>
<comment type="pathway">
    <text evidence="1">Carbohydrate degradation; glycolysis; D-glyceraldehyde 3-phosphate and glycerone phosphate from D-glucose: step 2/4.</text>
</comment>
<comment type="subcellular location">
    <subcellularLocation>
        <location evidence="1">Cytoplasm</location>
    </subcellularLocation>
</comment>
<comment type="similarity">
    <text evidence="1">Belongs to the GPI family.</text>
</comment>
<gene>
    <name evidence="1" type="primary">pgi</name>
    <name type="ordered locus">PputW619_0732</name>
</gene>
<feature type="chain" id="PRO_1000125746" description="Glucose-6-phosphate isomerase">
    <location>
        <begin position="1"/>
        <end position="554"/>
    </location>
</feature>
<feature type="active site" description="Proton donor" evidence="1">
    <location>
        <position position="359"/>
    </location>
</feature>
<feature type="active site" evidence="1">
    <location>
        <position position="390"/>
    </location>
</feature>
<feature type="active site" evidence="1">
    <location>
        <position position="518"/>
    </location>
</feature>
<proteinExistence type="inferred from homology"/>
<dbReference type="EC" id="5.3.1.9" evidence="1"/>
<dbReference type="EMBL" id="CP000949">
    <property type="protein sequence ID" value="ACA71237.1"/>
    <property type="molecule type" value="Genomic_DNA"/>
</dbReference>
<dbReference type="SMR" id="B1J2C0"/>
<dbReference type="STRING" id="390235.PputW619_0732"/>
<dbReference type="KEGG" id="ppw:PputW619_0732"/>
<dbReference type="eggNOG" id="COG0166">
    <property type="taxonomic scope" value="Bacteria"/>
</dbReference>
<dbReference type="HOGENOM" id="CLU_017947_3_1_6"/>
<dbReference type="OrthoDB" id="140919at2"/>
<dbReference type="UniPathway" id="UPA00109">
    <property type="reaction ID" value="UER00181"/>
</dbReference>
<dbReference type="UniPathway" id="UPA00138"/>
<dbReference type="GO" id="GO:0005829">
    <property type="term" value="C:cytosol"/>
    <property type="evidence" value="ECO:0007669"/>
    <property type="project" value="TreeGrafter"/>
</dbReference>
<dbReference type="GO" id="GO:0097367">
    <property type="term" value="F:carbohydrate derivative binding"/>
    <property type="evidence" value="ECO:0007669"/>
    <property type="project" value="InterPro"/>
</dbReference>
<dbReference type="GO" id="GO:0004347">
    <property type="term" value="F:glucose-6-phosphate isomerase activity"/>
    <property type="evidence" value="ECO:0007669"/>
    <property type="project" value="UniProtKB-UniRule"/>
</dbReference>
<dbReference type="GO" id="GO:0048029">
    <property type="term" value="F:monosaccharide binding"/>
    <property type="evidence" value="ECO:0007669"/>
    <property type="project" value="TreeGrafter"/>
</dbReference>
<dbReference type="GO" id="GO:0006094">
    <property type="term" value="P:gluconeogenesis"/>
    <property type="evidence" value="ECO:0007669"/>
    <property type="project" value="UniProtKB-UniRule"/>
</dbReference>
<dbReference type="GO" id="GO:0051156">
    <property type="term" value="P:glucose 6-phosphate metabolic process"/>
    <property type="evidence" value="ECO:0007669"/>
    <property type="project" value="TreeGrafter"/>
</dbReference>
<dbReference type="GO" id="GO:0006096">
    <property type="term" value="P:glycolytic process"/>
    <property type="evidence" value="ECO:0007669"/>
    <property type="project" value="UniProtKB-UniRule"/>
</dbReference>
<dbReference type="CDD" id="cd05015">
    <property type="entry name" value="SIS_PGI_1"/>
    <property type="match status" value="1"/>
</dbReference>
<dbReference type="CDD" id="cd05016">
    <property type="entry name" value="SIS_PGI_2"/>
    <property type="match status" value="1"/>
</dbReference>
<dbReference type="FunFam" id="3.40.50.10490:FF:000018">
    <property type="entry name" value="Glucose-6-phosphate isomerase"/>
    <property type="match status" value="1"/>
</dbReference>
<dbReference type="Gene3D" id="1.10.1390.10">
    <property type="match status" value="1"/>
</dbReference>
<dbReference type="Gene3D" id="3.40.50.10490">
    <property type="entry name" value="Glucose-6-phosphate isomerase like protein, domain 1"/>
    <property type="match status" value="2"/>
</dbReference>
<dbReference type="HAMAP" id="MF_00473">
    <property type="entry name" value="G6P_isomerase"/>
    <property type="match status" value="1"/>
</dbReference>
<dbReference type="InterPro" id="IPR001672">
    <property type="entry name" value="G6P_Isomerase"/>
</dbReference>
<dbReference type="InterPro" id="IPR023096">
    <property type="entry name" value="G6P_Isomerase_C"/>
</dbReference>
<dbReference type="InterPro" id="IPR018189">
    <property type="entry name" value="Phosphoglucose_isomerase_CS"/>
</dbReference>
<dbReference type="InterPro" id="IPR046348">
    <property type="entry name" value="SIS_dom_sf"/>
</dbReference>
<dbReference type="InterPro" id="IPR035476">
    <property type="entry name" value="SIS_PGI_1"/>
</dbReference>
<dbReference type="InterPro" id="IPR035482">
    <property type="entry name" value="SIS_PGI_2"/>
</dbReference>
<dbReference type="NCBIfam" id="NF001211">
    <property type="entry name" value="PRK00179.1"/>
    <property type="match status" value="1"/>
</dbReference>
<dbReference type="PANTHER" id="PTHR11469">
    <property type="entry name" value="GLUCOSE-6-PHOSPHATE ISOMERASE"/>
    <property type="match status" value="1"/>
</dbReference>
<dbReference type="PANTHER" id="PTHR11469:SF1">
    <property type="entry name" value="GLUCOSE-6-PHOSPHATE ISOMERASE"/>
    <property type="match status" value="1"/>
</dbReference>
<dbReference type="Pfam" id="PF00342">
    <property type="entry name" value="PGI"/>
    <property type="match status" value="1"/>
</dbReference>
<dbReference type="PRINTS" id="PR00662">
    <property type="entry name" value="G6PISOMERASE"/>
</dbReference>
<dbReference type="SUPFAM" id="SSF53697">
    <property type="entry name" value="SIS domain"/>
    <property type="match status" value="1"/>
</dbReference>
<dbReference type="PROSITE" id="PS00765">
    <property type="entry name" value="P_GLUCOSE_ISOMERASE_1"/>
    <property type="match status" value="1"/>
</dbReference>
<dbReference type="PROSITE" id="PS00174">
    <property type="entry name" value="P_GLUCOSE_ISOMERASE_2"/>
    <property type="match status" value="1"/>
</dbReference>
<dbReference type="PROSITE" id="PS51463">
    <property type="entry name" value="P_GLUCOSE_ISOMERASE_3"/>
    <property type="match status" value="1"/>
</dbReference>
<sequence>MAYYRTPHDVTALPAWQALQQHRDAMQDFSMREAFAADSKRFDEFSLSCCGLFLDYSKNLINEQSRDLLVQLAEQVGLQDAIKSMFSGEIINASEGRPVLHTALRRPVGDKLSVNGVNVMPEVHKVLNQITELVGRIHDGLWRGYSEKPITDVVNIGIGGSFLGPELVSEALLPYAQRGVRCHYLANIDGSEFHELSANLRAETTLFIVSSKSFNTLETLKNAMAARTWYLAQGGSEAELYRHFIAVSSNKAAAVAFGIREENIFPMWDWVGGRYSLWSAIGLPIALAIGTANFKELLSGAYTMDQHFQTAPFEKNMPVLLALLGVWYGNFWGARSHAILPYDHYLRNITKHLQQLDMESNGKSVLTDGTPVKTDTGPVIWGGVGCNGQHAYHQLLHQGTQLIPADFIVPVVSFNPVADHHQWLYANCLSQSQALMLGKTREEAEAELRQKGLNEADIEKLAPHKVIPGNRPSNTLVVERISPRRLGALVAMYEHKVFVQSVIWGINAFDQWGVELGKELGKGVYQRIVGSLEDSAEDGSTQGLINYFRGRHRG</sequence>